<comment type="similarity">
    <text evidence="1">Belongs to the UPF0102 family.</text>
</comment>
<sequence length="123" mass="14514">MHYCNKDIGSFGETIAVDYIKNCGYIILERNFRCKLGEIDIIAKDKNFIVFIEVKTRYSYIYGSPSEAITFRKQNKIYKTAQLYIIKKAIHNKFYFRFDVIEVILNTLNSNYSVKLIKNAFQI</sequence>
<name>Y2440_CLOBH</name>
<organism>
    <name type="scientific">Clostridium botulinum (strain Hall / ATCC 3502 / NCTC 13319 / Type A)</name>
    <dbReference type="NCBI Taxonomy" id="441771"/>
    <lineage>
        <taxon>Bacteria</taxon>
        <taxon>Bacillati</taxon>
        <taxon>Bacillota</taxon>
        <taxon>Clostridia</taxon>
        <taxon>Eubacteriales</taxon>
        <taxon>Clostridiaceae</taxon>
        <taxon>Clostridium</taxon>
    </lineage>
</organism>
<keyword id="KW-1185">Reference proteome</keyword>
<feature type="chain" id="PRO_1000009203" description="UPF0102 protein CBO2440/CLC_2288">
    <location>
        <begin position="1"/>
        <end position="123"/>
    </location>
</feature>
<proteinExistence type="inferred from homology"/>
<reference key="1">
    <citation type="journal article" date="2007" name="Genome Res.">
        <title>Genome sequence of a proteolytic (Group I) Clostridium botulinum strain Hall A and comparative analysis of the clostridial genomes.</title>
        <authorList>
            <person name="Sebaihia M."/>
            <person name="Peck M.W."/>
            <person name="Minton N.P."/>
            <person name="Thomson N.R."/>
            <person name="Holden M.T.G."/>
            <person name="Mitchell W.J."/>
            <person name="Carter A.T."/>
            <person name="Bentley S.D."/>
            <person name="Mason D.R."/>
            <person name="Crossman L."/>
            <person name="Paul C.J."/>
            <person name="Ivens A."/>
            <person name="Wells-Bennik M.H.J."/>
            <person name="Davis I.J."/>
            <person name="Cerdeno-Tarraga A.M."/>
            <person name="Churcher C."/>
            <person name="Quail M.A."/>
            <person name="Chillingworth T."/>
            <person name="Feltwell T."/>
            <person name="Fraser A."/>
            <person name="Goodhead I."/>
            <person name="Hance Z."/>
            <person name="Jagels K."/>
            <person name="Larke N."/>
            <person name="Maddison M."/>
            <person name="Moule S."/>
            <person name="Mungall K."/>
            <person name="Norbertczak H."/>
            <person name="Rabbinowitsch E."/>
            <person name="Sanders M."/>
            <person name="Simmonds M."/>
            <person name="White B."/>
            <person name="Whithead S."/>
            <person name="Parkhill J."/>
        </authorList>
    </citation>
    <scope>NUCLEOTIDE SEQUENCE [LARGE SCALE GENOMIC DNA]</scope>
    <source>
        <strain>Hall / ATCC 3502 / NCTC 13319 / Type A</strain>
    </source>
</reference>
<reference key="2">
    <citation type="journal article" date="2007" name="PLoS ONE">
        <title>Analysis of the neurotoxin complex genes in Clostridium botulinum A1-A4 and B1 strains: BoNT/A3, /Ba4 and /B1 clusters are located within plasmids.</title>
        <authorList>
            <person name="Smith T.J."/>
            <person name="Hill K.K."/>
            <person name="Foley B.T."/>
            <person name="Detter J.C."/>
            <person name="Munk A.C."/>
            <person name="Bruce D.C."/>
            <person name="Doggett N.A."/>
            <person name="Smith L.A."/>
            <person name="Marks J.D."/>
            <person name="Xie G."/>
            <person name="Brettin T.S."/>
        </authorList>
    </citation>
    <scope>NUCLEOTIDE SEQUENCE [LARGE SCALE GENOMIC DNA]</scope>
    <source>
        <strain>Hall / ATCC 3502 / NCTC 13319 / Type A</strain>
    </source>
</reference>
<dbReference type="EMBL" id="CP000727">
    <property type="protein sequence ID" value="ABS36036.1"/>
    <property type="molecule type" value="Genomic_DNA"/>
</dbReference>
<dbReference type="EMBL" id="AM412317">
    <property type="protein sequence ID" value="CAL83990.1"/>
    <property type="molecule type" value="Genomic_DNA"/>
</dbReference>
<dbReference type="RefSeq" id="WP_003384683.1">
    <property type="nucleotide sequence ID" value="NC_009698.1"/>
</dbReference>
<dbReference type="RefSeq" id="YP_001254939.1">
    <property type="nucleotide sequence ID" value="NC_009495.1"/>
</dbReference>
<dbReference type="RefSeq" id="YP_001388132.1">
    <property type="nucleotide sequence ID" value="NC_009698.1"/>
</dbReference>
<dbReference type="SMR" id="A5I4L8"/>
<dbReference type="GeneID" id="5186695"/>
<dbReference type="KEGG" id="cbh:CLC_2288"/>
<dbReference type="KEGG" id="cbo:CBO2440"/>
<dbReference type="PATRIC" id="fig|413999.7.peg.2417"/>
<dbReference type="HOGENOM" id="CLU_115353_2_1_9"/>
<dbReference type="PRO" id="PR:A5I4L8"/>
<dbReference type="Proteomes" id="UP000001986">
    <property type="component" value="Chromosome"/>
</dbReference>
<dbReference type="GO" id="GO:0003676">
    <property type="term" value="F:nucleic acid binding"/>
    <property type="evidence" value="ECO:0007669"/>
    <property type="project" value="InterPro"/>
</dbReference>
<dbReference type="CDD" id="cd20736">
    <property type="entry name" value="PoNe_Nuclease"/>
    <property type="match status" value="1"/>
</dbReference>
<dbReference type="Gene3D" id="3.40.1350.10">
    <property type="match status" value="1"/>
</dbReference>
<dbReference type="HAMAP" id="MF_00048">
    <property type="entry name" value="UPF0102"/>
    <property type="match status" value="1"/>
</dbReference>
<dbReference type="InterPro" id="IPR011335">
    <property type="entry name" value="Restrct_endonuc-II-like"/>
</dbReference>
<dbReference type="InterPro" id="IPR011856">
    <property type="entry name" value="tRNA_endonuc-like_dom_sf"/>
</dbReference>
<dbReference type="InterPro" id="IPR003509">
    <property type="entry name" value="UPF0102_YraN-like"/>
</dbReference>
<dbReference type="NCBIfam" id="NF009150">
    <property type="entry name" value="PRK12497.1-3"/>
    <property type="match status" value="1"/>
</dbReference>
<dbReference type="NCBIfam" id="NF009154">
    <property type="entry name" value="PRK12497.3-3"/>
    <property type="match status" value="1"/>
</dbReference>
<dbReference type="NCBIfam" id="TIGR00252">
    <property type="entry name" value="YraN family protein"/>
    <property type="match status" value="1"/>
</dbReference>
<dbReference type="PANTHER" id="PTHR34039">
    <property type="entry name" value="UPF0102 PROTEIN YRAN"/>
    <property type="match status" value="1"/>
</dbReference>
<dbReference type="PANTHER" id="PTHR34039:SF1">
    <property type="entry name" value="UPF0102 PROTEIN YRAN"/>
    <property type="match status" value="1"/>
</dbReference>
<dbReference type="Pfam" id="PF02021">
    <property type="entry name" value="UPF0102"/>
    <property type="match status" value="1"/>
</dbReference>
<dbReference type="SUPFAM" id="SSF52980">
    <property type="entry name" value="Restriction endonuclease-like"/>
    <property type="match status" value="1"/>
</dbReference>
<evidence type="ECO:0000255" key="1">
    <source>
        <dbReference type="HAMAP-Rule" id="MF_00048"/>
    </source>
</evidence>
<gene>
    <name type="ordered locus">CBO2440</name>
    <name type="ordered locus">CLC_2288</name>
</gene>
<accession>A5I4L8</accession>
<accession>A7G5R7</accession>
<protein>
    <recommendedName>
        <fullName evidence="1">UPF0102 protein CBO2440/CLC_2288</fullName>
    </recommendedName>
</protein>